<keyword id="KW-0963">Cytoplasm</keyword>
<keyword id="KW-0489">Methyltransferase</keyword>
<keyword id="KW-1185">Reference proteome</keyword>
<keyword id="KW-0698">rRNA processing</keyword>
<keyword id="KW-0949">S-adenosyl-L-methionine</keyword>
<keyword id="KW-0808">Transferase</keyword>
<sequence>MARSKSSNRWLEEHFSDQYVKKSHADGYRTRASYKLLELNDKDRLIRPGMLVVDLGAAPGGWSQVAGQQVGTHGRVVASDILPMDTLEGVEFIQGDFTDDSVFNQILLAIGDTPVDLVISDMAPNMSGINAVDQPQAMYLVELALDMAKRVLKPQGNFVAKVFHGEGYDQYLKDLKGCFEKVVIRKPDASRSRSREVYVVGKGFLGCQTVS</sequence>
<accession>B3PLQ4</accession>
<reference key="1">
    <citation type="journal article" date="2008" name="J. Bacteriol.">
        <title>Insights into plant cell wall degradation from the genome sequence of the soil bacterium Cellvibrio japonicus.</title>
        <authorList>
            <person name="DeBoy R.T."/>
            <person name="Mongodin E.F."/>
            <person name="Fouts D.E."/>
            <person name="Tailford L.E."/>
            <person name="Khouri H."/>
            <person name="Emerson J.B."/>
            <person name="Mohamoud Y."/>
            <person name="Watkins K."/>
            <person name="Henrissat B."/>
            <person name="Gilbert H.J."/>
            <person name="Nelson K.E."/>
        </authorList>
    </citation>
    <scope>NUCLEOTIDE SEQUENCE [LARGE SCALE GENOMIC DNA]</scope>
    <source>
        <strain>Ueda107</strain>
    </source>
</reference>
<proteinExistence type="inferred from homology"/>
<protein>
    <recommendedName>
        <fullName evidence="1">Ribosomal RNA large subunit methyltransferase E</fullName>
        <ecNumber evidence="1">2.1.1.166</ecNumber>
    </recommendedName>
    <alternativeName>
        <fullName evidence="1">23S rRNA Um2552 methyltransferase</fullName>
    </alternativeName>
    <alternativeName>
        <fullName evidence="1">rRNA (uridine-2'-O-)-methyltransferase</fullName>
    </alternativeName>
</protein>
<name>RLME_CELJU</name>
<evidence type="ECO:0000255" key="1">
    <source>
        <dbReference type="HAMAP-Rule" id="MF_01547"/>
    </source>
</evidence>
<dbReference type="EC" id="2.1.1.166" evidence="1"/>
<dbReference type="EMBL" id="CP000934">
    <property type="protein sequence ID" value="ACE83312.1"/>
    <property type="molecule type" value="Genomic_DNA"/>
</dbReference>
<dbReference type="RefSeq" id="WP_012488269.1">
    <property type="nucleotide sequence ID" value="NC_010995.1"/>
</dbReference>
<dbReference type="SMR" id="B3PLQ4"/>
<dbReference type="STRING" id="498211.CJA_2675"/>
<dbReference type="KEGG" id="cja:CJA_2675"/>
<dbReference type="eggNOG" id="COG0293">
    <property type="taxonomic scope" value="Bacteria"/>
</dbReference>
<dbReference type="HOGENOM" id="CLU_009422_4_0_6"/>
<dbReference type="OrthoDB" id="9790080at2"/>
<dbReference type="Proteomes" id="UP000001036">
    <property type="component" value="Chromosome"/>
</dbReference>
<dbReference type="GO" id="GO:0005737">
    <property type="term" value="C:cytoplasm"/>
    <property type="evidence" value="ECO:0007669"/>
    <property type="project" value="UniProtKB-SubCell"/>
</dbReference>
<dbReference type="GO" id="GO:0008650">
    <property type="term" value="F:rRNA (uridine-2'-O-)-methyltransferase activity"/>
    <property type="evidence" value="ECO:0007669"/>
    <property type="project" value="UniProtKB-UniRule"/>
</dbReference>
<dbReference type="FunFam" id="3.40.50.150:FF:000005">
    <property type="entry name" value="Ribosomal RNA large subunit methyltransferase E"/>
    <property type="match status" value="1"/>
</dbReference>
<dbReference type="Gene3D" id="3.40.50.150">
    <property type="entry name" value="Vaccinia Virus protein VP39"/>
    <property type="match status" value="1"/>
</dbReference>
<dbReference type="HAMAP" id="MF_01547">
    <property type="entry name" value="RNA_methyltr_E"/>
    <property type="match status" value="1"/>
</dbReference>
<dbReference type="InterPro" id="IPR050082">
    <property type="entry name" value="RNA_methyltr_RlmE"/>
</dbReference>
<dbReference type="InterPro" id="IPR002877">
    <property type="entry name" value="RNA_MeTrfase_FtsJ_dom"/>
</dbReference>
<dbReference type="InterPro" id="IPR015507">
    <property type="entry name" value="rRNA-MeTfrase_E"/>
</dbReference>
<dbReference type="InterPro" id="IPR029063">
    <property type="entry name" value="SAM-dependent_MTases_sf"/>
</dbReference>
<dbReference type="NCBIfam" id="NF008390">
    <property type="entry name" value="PRK11188.1"/>
    <property type="match status" value="1"/>
</dbReference>
<dbReference type="PANTHER" id="PTHR10920">
    <property type="entry name" value="RIBOSOMAL RNA METHYLTRANSFERASE"/>
    <property type="match status" value="1"/>
</dbReference>
<dbReference type="PANTHER" id="PTHR10920:SF18">
    <property type="entry name" value="RRNA METHYLTRANSFERASE 2, MITOCHONDRIAL"/>
    <property type="match status" value="1"/>
</dbReference>
<dbReference type="Pfam" id="PF01728">
    <property type="entry name" value="FtsJ"/>
    <property type="match status" value="1"/>
</dbReference>
<dbReference type="PIRSF" id="PIRSF005461">
    <property type="entry name" value="23S_rRNA_mtase"/>
    <property type="match status" value="1"/>
</dbReference>
<dbReference type="SUPFAM" id="SSF53335">
    <property type="entry name" value="S-adenosyl-L-methionine-dependent methyltransferases"/>
    <property type="match status" value="1"/>
</dbReference>
<comment type="function">
    <text evidence="1">Specifically methylates the uridine in position 2552 of 23S rRNA at the 2'-O position of the ribose in the fully assembled 50S ribosomal subunit.</text>
</comment>
<comment type="catalytic activity">
    <reaction evidence="1">
        <text>uridine(2552) in 23S rRNA + S-adenosyl-L-methionine = 2'-O-methyluridine(2552) in 23S rRNA + S-adenosyl-L-homocysteine + H(+)</text>
        <dbReference type="Rhea" id="RHEA:42720"/>
        <dbReference type="Rhea" id="RHEA-COMP:10202"/>
        <dbReference type="Rhea" id="RHEA-COMP:10203"/>
        <dbReference type="ChEBI" id="CHEBI:15378"/>
        <dbReference type="ChEBI" id="CHEBI:57856"/>
        <dbReference type="ChEBI" id="CHEBI:59789"/>
        <dbReference type="ChEBI" id="CHEBI:65315"/>
        <dbReference type="ChEBI" id="CHEBI:74478"/>
        <dbReference type="EC" id="2.1.1.166"/>
    </reaction>
</comment>
<comment type="subcellular location">
    <subcellularLocation>
        <location evidence="1">Cytoplasm</location>
    </subcellularLocation>
</comment>
<comment type="similarity">
    <text evidence="1">Belongs to the class I-like SAM-binding methyltransferase superfamily. RNA methyltransferase RlmE family.</text>
</comment>
<organism>
    <name type="scientific">Cellvibrio japonicus (strain Ueda107)</name>
    <name type="common">Pseudomonas fluorescens subsp. cellulosa</name>
    <dbReference type="NCBI Taxonomy" id="498211"/>
    <lineage>
        <taxon>Bacteria</taxon>
        <taxon>Pseudomonadati</taxon>
        <taxon>Pseudomonadota</taxon>
        <taxon>Gammaproteobacteria</taxon>
        <taxon>Cellvibrionales</taxon>
        <taxon>Cellvibrionaceae</taxon>
        <taxon>Cellvibrio</taxon>
    </lineage>
</organism>
<feature type="chain" id="PRO_1000194984" description="Ribosomal RNA large subunit methyltransferase E">
    <location>
        <begin position="1"/>
        <end position="211"/>
    </location>
</feature>
<feature type="active site" description="Proton acceptor" evidence="1">
    <location>
        <position position="161"/>
    </location>
</feature>
<feature type="binding site" evidence="1">
    <location>
        <position position="60"/>
    </location>
    <ligand>
        <name>S-adenosyl-L-methionine</name>
        <dbReference type="ChEBI" id="CHEBI:59789"/>
    </ligand>
</feature>
<feature type="binding site" evidence="1">
    <location>
        <position position="62"/>
    </location>
    <ligand>
        <name>S-adenosyl-L-methionine</name>
        <dbReference type="ChEBI" id="CHEBI:59789"/>
    </ligand>
</feature>
<feature type="binding site" evidence="1">
    <location>
        <position position="80"/>
    </location>
    <ligand>
        <name>S-adenosyl-L-methionine</name>
        <dbReference type="ChEBI" id="CHEBI:59789"/>
    </ligand>
</feature>
<feature type="binding site" evidence="1">
    <location>
        <position position="96"/>
    </location>
    <ligand>
        <name>S-adenosyl-L-methionine</name>
        <dbReference type="ChEBI" id="CHEBI:59789"/>
    </ligand>
</feature>
<feature type="binding site" evidence="1">
    <location>
        <position position="121"/>
    </location>
    <ligand>
        <name>S-adenosyl-L-methionine</name>
        <dbReference type="ChEBI" id="CHEBI:59789"/>
    </ligand>
</feature>
<gene>
    <name evidence="1" type="primary">rlmE</name>
    <name evidence="1" type="synonym">ftsJ</name>
    <name evidence="1" type="synonym">rrmJ</name>
    <name type="ordered locus">CJA_2675</name>
</gene>